<protein>
    <recommendedName>
        <fullName evidence="1">Alanine racemase</fullName>
        <ecNumber evidence="1">5.1.1.1</ecNumber>
    </recommendedName>
</protein>
<gene>
    <name type="primary">alr</name>
    <name type="ordered locus">SPD_1508</name>
</gene>
<accession>Q04J74</accession>
<sequence>MKASPHRPTKALIHLGAIRQNIQQMGAHIPQGTLKLAVVKANAYGHGAVAVAKAIQDDVDGFCVSNIDEAIELRQAGLSKPILILGVSEIEAVALAKEYDFTLTVAGLEWIQALLDKEVDLTGLTVHLKIDSGMGRIGFREASEVEQAQDLLQQHGVCVEGIFTHFATADEESDDYFNAQLERFKTILASMKEVPELVHASNSATTLWHVETIFNAVRMGDAMYGLNPSGAVLDLPYDLIPALTLESALVHVKTVPAGACMGYGATYQADSEQVIATVPIGYADGWTRDMQNFSVLVDGQACPIVGRVSMDQITIRLPKLYPLGTKVTLIGSNGDKEITATQVATYRVTINYEVVCLLSDRIPREYY</sequence>
<proteinExistence type="inferred from homology"/>
<keyword id="KW-0413">Isomerase</keyword>
<keyword id="KW-0663">Pyridoxal phosphate</keyword>
<keyword id="KW-1185">Reference proteome</keyword>
<dbReference type="EC" id="5.1.1.1" evidence="1"/>
<dbReference type="EMBL" id="CP000410">
    <property type="protein sequence ID" value="ABJ54061.1"/>
    <property type="molecule type" value="Genomic_DNA"/>
</dbReference>
<dbReference type="RefSeq" id="WP_000648075.1">
    <property type="nucleotide sequence ID" value="NZ_JAMLJR010000003.1"/>
</dbReference>
<dbReference type="SMR" id="Q04J74"/>
<dbReference type="PaxDb" id="373153-SPD_1508"/>
<dbReference type="KEGG" id="spd:SPD_1508"/>
<dbReference type="eggNOG" id="COG0787">
    <property type="taxonomic scope" value="Bacteria"/>
</dbReference>
<dbReference type="HOGENOM" id="CLU_028393_2_1_9"/>
<dbReference type="BioCyc" id="SPNE373153:G1G6V-1628-MONOMER"/>
<dbReference type="UniPathway" id="UPA00042">
    <property type="reaction ID" value="UER00497"/>
</dbReference>
<dbReference type="Proteomes" id="UP000001452">
    <property type="component" value="Chromosome"/>
</dbReference>
<dbReference type="GO" id="GO:0005829">
    <property type="term" value="C:cytosol"/>
    <property type="evidence" value="ECO:0007669"/>
    <property type="project" value="TreeGrafter"/>
</dbReference>
<dbReference type="GO" id="GO:0008784">
    <property type="term" value="F:alanine racemase activity"/>
    <property type="evidence" value="ECO:0007669"/>
    <property type="project" value="UniProtKB-UniRule"/>
</dbReference>
<dbReference type="GO" id="GO:0030170">
    <property type="term" value="F:pyridoxal phosphate binding"/>
    <property type="evidence" value="ECO:0007669"/>
    <property type="project" value="UniProtKB-UniRule"/>
</dbReference>
<dbReference type="GO" id="GO:0030632">
    <property type="term" value="P:D-alanine biosynthetic process"/>
    <property type="evidence" value="ECO:0007669"/>
    <property type="project" value="UniProtKB-UniRule"/>
</dbReference>
<dbReference type="GO" id="GO:0009252">
    <property type="term" value="P:peptidoglycan biosynthetic process"/>
    <property type="evidence" value="ECO:0007669"/>
    <property type="project" value="TreeGrafter"/>
</dbReference>
<dbReference type="CDD" id="cd00430">
    <property type="entry name" value="PLPDE_III_AR"/>
    <property type="match status" value="1"/>
</dbReference>
<dbReference type="FunFam" id="2.40.37.10:FF:000006">
    <property type="entry name" value="Alanine racemase"/>
    <property type="match status" value="1"/>
</dbReference>
<dbReference type="FunFam" id="3.20.20.10:FF:000002">
    <property type="entry name" value="Alanine racemase"/>
    <property type="match status" value="1"/>
</dbReference>
<dbReference type="Gene3D" id="3.20.20.10">
    <property type="entry name" value="Alanine racemase"/>
    <property type="match status" value="1"/>
</dbReference>
<dbReference type="Gene3D" id="2.40.37.10">
    <property type="entry name" value="Lyase, Ornithine Decarboxylase, Chain A, domain 1"/>
    <property type="match status" value="1"/>
</dbReference>
<dbReference type="HAMAP" id="MF_01201">
    <property type="entry name" value="Ala_racemase"/>
    <property type="match status" value="1"/>
</dbReference>
<dbReference type="InterPro" id="IPR000821">
    <property type="entry name" value="Ala_racemase"/>
</dbReference>
<dbReference type="InterPro" id="IPR009006">
    <property type="entry name" value="Ala_racemase/Decarboxylase_C"/>
</dbReference>
<dbReference type="InterPro" id="IPR011079">
    <property type="entry name" value="Ala_racemase_C"/>
</dbReference>
<dbReference type="InterPro" id="IPR001608">
    <property type="entry name" value="Ala_racemase_N"/>
</dbReference>
<dbReference type="InterPro" id="IPR020622">
    <property type="entry name" value="Ala_racemase_pyridoxalP-BS"/>
</dbReference>
<dbReference type="InterPro" id="IPR029066">
    <property type="entry name" value="PLP-binding_barrel"/>
</dbReference>
<dbReference type="NCBIfam" id="TIGR00492">
    <property type="entry name" value="alr"/>
    <property type="match status" value="1"/>
</dbReference>
<dbReference type="PANTHER" id="PTHR30511">
    <property type="entry name" value="ALANINE RACEMASE"/>
    <property type="match status" value="1"/>
</dbReference>
<dbReference type="PANTHER" id="PTHR30511:SF0">
    <property type="entry name" value="ALANINE RACEMASE, CATABOLIC-RELATED"/>
    <property type="match status" value="1"/>
</dbReference>
<dbReference type="Pfam" id="PF00842">
    <property type="entry name" value="Ala_racemase_C"/>
    <property type="match status" value="1"/>
</dbReference>
<dbReference type="Pfam" id="PF01168">
    <property type="entry name" value="Ala_racemase_N"/>
    <property type="match status" value="1"/>
</dbReference>
<dbReference type="PRINTS" id="PR00992">
    <property type="entry name" value="ALARACEMASE"/>
</dbReference>
<dbReference type="SMART" id="SM01005">
    <property type="entry name" value="Ala_racemase_C"/>
    <property type="match status" value="1"/>
</dbReference>
<dbReference type="SUPFAM" id="SSF50621">
    <property type="entry name" value="Alanine racemase C-terminal domain-like"/>
    <property type="match status" value="1"/>
</dbReference>
<dbReference type="SUPFAM" id="SSF51419">
    <property type="entry name" value="PLP-binding barrel"/>
    <property type="match status" value="1"/>
</dbReference>
<dbReference type="PROSITE" id="PS00395">
    <property type="entry name" value="ALANINE_RACEMASE"/>
    <property type="match status" value="1"/>
</dbReference>
<evidence type="ECO:0000255" key="1">
    <source>
        <dbReference type="HAMAP-Rule" id="MF_01201"/>
    </source>
</evidence>
<organism>
    <name type="scientific">Streptococcus pneumoniae serotype 2 (strain D39 / NCTC 7466)</name>
    <dbReference type="NCBI Taxonomy" id="373153"/>
    <lineage>
        <taxon>Bacteria</taxon>
        <taxon>Bacillati</taxon>
        <taxon>Bacillota</taxon>
        <taxon>Bacilli</taxon>
        <taxon>Lactobacillales</taxon>
        <taxon>Streptococcaceae</taxon>
        <taxon>Streptococcus</taxon>
    </lineage>
</organism>
<comment type="function">
    <text evidence="1">Catalyzes the interconversion of L-alanine and D-alanine. May also act on other amino acids.</text>
</comment>
<comment type="catalytic activity">
    <reaction evidence="1">
        <text>L-alanine = D-alanine</text>
        <dbReference type="Rhea" id="RHEA:20249"/>
        <dbReference type="ChEBI" id="CHEBI:57416"/>
        <dbReference type="ChEBI" id="CHEBI:57972"/>
        <dbReference type="EC" id="5.1.1.1"/>
    </reaction>
</comment>
<comment type="cofactor">
    <cofactor evidence="1">
        <name>pyridoxal 5'-phosphate</name>
        <dbReference type="ChEBI" id="CHEBI:597326"/>
    </cofactor>
</comment>
<comment type="pathway">
    <text evidence="1">Amino-acid biosynthesis; D-alanine biosynthesis; D-alanine from L-alanine: step 1/1.</text>
</comment>
<comment type="similarity">
    <text evidence="1">Belongs to the alanine racemase family.</text>
</comment>
<reference key="1">
    <citation type="journal article" date="2007" name="J. Bacteriol.">
        <title>Genome sequence of Avery's virulent serotype 2 strain D39 of Streptococcus pneumoniae and comparison with that of unencapsulated laboratory strain R6.</title>
        <authorList>
            <person name="Lanie J.A."/>
            <person name="Ng W.-L."/>
            <person name="Kazmierczak K.M."/>
            <person name="Andrzejewski T.M."/>
            <person name="Davidsen T.M."/>
            <person name="Wayne K.J."/>
            <person name="Tettelin H."/>
            <person name="Glass J.I."/>
            <person name="Winkler M.E."/>
        </authorList>
    </citation>
    <scope>NUCLEOTIDE SEQUENCE [LARGE SCALE GENOMIC DNA]</scope>
    <source>
        <strain>D39 / NCTC 7466</strain>
    </source>
</reference>
<name>ALR_STRP2</name>
<feature type="chain" id="PRO_1000066045" description="Alanine racemase">
    <location>
        <begin position="1"/>
        <end position="367"/>
    </location>
</feature>
<feature type="active site" description="Proton acceptor; specific for D-alanine" evidence="1">
    <location>
        <position position="40"/>
    </location>
</feature>
<feature type="active site" description="Proton acceptor; specific for L-alanine" evidence="1">
    <location>
        <position position="263"/>
    </location>
</feature>
<feature type="binding site" evidence="1">
    <location>
        <position position="136"/>
    </location>
    <ligand>
        <name>substrate</name>
    </ligand>
</feature>
<feature type="binding site" evidence="1">
    <location>
        <position position="310"/>
    </location>
    <ligand>
        <name>substrate</name>
    </ligand>
</feature>
<feature type="modified residue" description="N6-(pyridoxal phosphate)lysine" evidence="1">
    <location>
        <position position="40"/>
    </location>
</feature>